<keyword id="KW-0521">NADP</keyword>
<keyword id="KW-0547">Nucleotide-binding</keyword>
<keyword id="KW-0560">Oxidoreductase</keyword>
<proteinExistence type="inferred from homology"/>
<protein>
    <recommendedName>
        <fullName evidence="5">Trans-enoyl reductase himH</fullName>
        <ecNumber evidence="7">1.-.-.-</ecNumber>
    </recommendedName>
    <alternativeName>
        <fullName evidence="5">Himeic acid A biosynthesis cluster protein H</fullName>
    </alternativeName>
</protein>
<sequence>MASLINQAAWQPKARTRSLQVGPGPTPSPNEHEIVIKVAYAAVNPTDWKMQDTPYFELEYPFIWGTDVAGTIVQLGSEVTQFKVGQRVIGHCDSLLTRKVTNAGFQLYTTVREILVAEIPDSLPLANAAVLPLSVSTAASALYVQLDLPFPSLSPKSTGKRIVIWGGSSSVGSSAIQLAVASGLEVVATASQANHDLVRSLGASQVFDHRAPSVIDQMASVLQPGDYVVDCIGSPDTQAKCGELVGRIGGGTLPVMLWPQGGLPQNVRAVFVNGLDPGMVNLDVGNAVWRKFIPEALAAGKFQAKPDPRIVPGGLEKVQEGIDMLRQGVSAQKIVIEISRSE</sequence>
<name>HIMH_ASPJA</name>
<dbReference type="EC" id="1.-.-.-" evidence="7"/>
<dbReference type="EMBL" id="LC331673">
    <property type="protein sequence ID" value="BBA91552.1"/>
    <property type="molecule type" value="Genomic_DNA"/>
</dbReference>
<dbReference type="SMR" id="A0A2Z5TIQ0"/>
<dbReference type="GO" id="GO:0000166">
    <property type="term" value="F:nucleotide binding"/>
    <property type="evidence" value="ECO:0007669"/>
    <property type="project" value="UniProtKB-KW"/>
</dbReference>
<dbReference type="GO" id="GO:0016651">
    <property type="term" value="F:oxidoreductase activity, acting on NAD(P)H"/>
    <property type="evidence" value="ECO:0007669"/>
    <property type="project" value="InterPro"/>
</dbReference>
<dbReference type="CDD" id="cd08249">
    <property type="entry name" value="enoyl_reductase_like"/>
    <property type="match status" value="1"/>
</dbReference>
<dbReference type="Gene3D" id="3.90.180.10">
    <property type="entry name" value="Medium-chain alcohol dehydrogenases, catalytic domain"/>
    <property type="match status" value="1"/>
</dbReference>
<dbReference type="Gene3D" id="3.40.50.720">
    <property type="entry name" value="NAD(P)-binding Rossmann-like Domain"/>
    <property type="match status" value="1"/>
</dbReference>
<dbReference type="InterPro" id="IPR013149">
    <property type="entry name" value="ADH-like_C"/>
</dbReference>
<dbReference type="InterPro" id="IPR013154">
    <property type="entry name" value="ADH-like_N"/>
</dbReference>
<dbReference type="InterPro" id="IPR011032">
    <property type="entry name" value="GroES-like_sf"/>
</dbReference>
<dbReference type="InterPro" id="IPR036291">
    <property type="entry name" value="NAD(P)-bd_dom_sf"/>
</dbReference>
<dbReference type="InterPro" id="IPR020843">
    <property type="entry name" value="PKS_ER"/>
</dbReference>
<dbReference type="InterPro" id="IPR047122">
    <property type="entry name" value="Trans-enoyl_RdTase-like"/>
</dbReference>
<dbReference type="PANTHER" id="PTHR45348">
    <property type="entry name" value="HYPOTHETICAL OXIDOREDUCTASE (EUROFUNG)"/>
    <property type="match status" value="1"/>
</dbReference>
<dbReference type="PANTHER" id="PTHR45348:SF2">
    <property type="entry name" value="ZINC-TYPE ALCOHOL DEHYDROGENASE-LIKE PROTEIN C2E1P3.01"/>
    <property type="match status" value="1"/>
</dbReference>
<dbReference type="Pfam" id="PF08240">
    <property type="entry name" value="ADH_N"/>
    <property type="match status" value="1"/>
</dbReference>
<dbReference type="Pfam" id="PF00107">
    <property type="entry name" value="ADH_zinc_N"/>
    <property type="match status" value="1"/>
</dbReference>
<dbReference type="SMART" id="SM00829">
    <property type="entry name" value="PKS_ER"/>
    <property type="match status" value="1"/>
</dbReference>
<dbReference type="SUPFAM" id="SSF50129">
    <property type="entry name" value="GroES-like"/>
    <property type="match status" value="1"/>
</dbReference>
<dbReference type="SUPFAM" id="SSF51735">
    <property type="entry name" value="NAD(P)-binding Rossmann-fold domains"/>
    <property type="match status" value="1"/>
</dbReference>
<evidence type="ECO:0000250" key="1">
    <source>
        <dbReference type="UniProtKB" id="Q9Y7D0"/>
    </source>
</evidence>
<evidence type="ECO:0000255" key="2"/>
<evidence type="ECO:0000269" key="3">
    <source>
    </source>
</evidence>
<evidence type="ECO:0000269" key="4">
    <source>
    </source>
</evidence>
<evidence type="ECO:0000303" key="5">
    <source>
    </source>
</evidence>
<evidence type="ECO:0000305" key="6"/>
<evidence type="ECO:0000305" key="7">
    <source>
    </source>
</evidence>
<accession>A0A2Z5TIQ0</accession>
<comment type="function">
    <text evidence="3 4 7">Trans-enoyl reductase; part of the him gene cluster that mediates the biosynthesis of himeic acid A, a ubiquitin-activating enzyme (E1) inhibitor (PubMed:29314577). First, himA, together with the trans-enoyl reductase himH, catalyzes the formation of apolyketide chain, which is then condensed with leucine by the NRPS activity of himA. Dieckmann cyclization and release from himA gives a tetramic acid intermediate as the product of himA PKS-NRPS (PubMed:29314577). HimG then catalyzes alpha-oxidation of the tetramic acid ring, with a subsequent rearrangement to yield apyrone intermediate (Probable). Two terminal methyl groups of polyketide and amide side chains are oxidized to carboxylic acids by himC cytochrome P450 monooxygenase to form himeic acid A (Probable). Himeic acid A is further converted to himeic acid B and C during culture growth. No gene responsible for pyrone to pyridone conversion was found in the him gene cluster and himeic acid A is non-enzymatically converted to himeic acid C by the incorporation of an ammonium nitrogen atom in a pH5 buffer, and to himeic acid B at a conversion ratio of 50% during incubation in MeOH for 5 days (PubMed:29486950).</text>
</comment>
<comment type="pathway">
    <text evidence="7">Secondary metabolite biosynthesis.</text>
</comment>
<comment type="subunit">
    <text evidence="1">Monomer.</text>
</comment>
<comment type="similarity">
    <text evidence="6">Belongs to the zinc-containing alcohol dehydrogenase family.</text>
</comment>
<reference key="1">
    <citation type="journal article" date="2018" name="ChemBioChem">
        <title>Identification of the biosynthetic gene cluster for himeic acid A: a ubiquitin-activating enzyme (E1) inhibitor in Aspergillus japonicus MF275.</title>
        <authorList>
            <person name="Hashimoto M."/>
            <person name="Kato H."/>
            <person name="Katsuki A."/>
            <person name="Tsukamoto S."/>
            <person name="Fujii I."/>
        </authorList>
    </citation>
    <scope>NUCLEOTIDE SEQUENCE [GENOMIC DNA]</scope>
    <scope>FUNCTION</scope>
    <scope>PATHWAY</scope>
    <source>
        <strain>MF275</strain>
    </source>
</reference>
<reference key="2">
    <citation type="journal article" date="2018" name="Bioorg. Med. Chem.">
        <title>pH-dependent production of himeic acid A and its non-enzymatic conversions to himeic acids B and C.</title>
        <authorList>
            <person name="Katsuki A."/>
            <person name="Kato H."/>
            <person name="Tahara Y."/>
            <person name="Hashimoto M."/>
            <person name="Fujii I."/>
            <person name="Tsukamoto S."/>
        </authorList>
    </citation>
    <scope>FUNCTION</scope>
</reference>
<gene>
    <name evidence="5" type="primary">himH</name>
</gene>
<organism>
    <name type="scientific">Aspergillus japonicus</name>
    <dbReference type="NCBI Taxonomy" id="34381"/>
    <lineage>
        <taxon>Eukaryota</taxon>
        <taxon>Fungi</taxon>
        <taxon>Dikarya</taxon>
        <taxon>Ascomycota</taxon>
        <taxon>Pezizomycotina</taxon>
        <taxon>Eurotiomycetes</taxon>
        <taxon>Eurotiomycetidae</taxon>
        <taxon>Eurotiales</taxon>
        <taxon>Aspergillaceae</taxon>
        <taxon>Aspergillus</taxon>
        <taxon>Aspergillus subgen. Circumdati</taxon>
    </lineage>
</organism>
<feature type="chain" id="PRO_0000445956" description="Trans-enoyl reductase himH">
    <location>
        <begin position="1"/>
        <end position="342"/>
    </location>
</feature>
<feature type="binding site" evidence="1">
    <location>
        <begin position="46"/>
        <end position="49"/>
    </location>
    <ligand>
        <name>NADP(+)</name>
        <dbReference type="ChEBI" id="CHEBI:58349"/>
    </ligand>
</feature>
<feature type="binding site" evidence="2">
    <location>
        <begin position="133"/>
        <end position="140"/>
    </location>
    <ligand>
        <name>substrate</name>
    </ligand>
</feature>
<feature type="binding site" evidence="1">
    <location>
        <begin position="168"/>
        <end position="171"/>
    </location>
    <ligand>
        <name>NADP(+)</name>
        <dbReference type="ChEBI" id="CHEBI:58349"/>
    </ligand>
</feature>
<feature type="binding site" evidence="1">
    <location>
        <begin position="191"/>
        <end position="194"/>
    </location>
    <ligand>
        <name>NADP(+)</name>
        <dbReference type="ChEBI" id="CHEBI:58349"/>
    </ligand>
</feature>
<feature type="binding site" evidence="1">
    <location>
        <begin position="255"/>
        <end position="256"/>
    </location>
    <ligand>
        <name>NADP(+)</name>
        <dbReference type="ChEBI" id="CHEBI:58349"/>
    </ligand>
</feature>
<feature type="binding site" evidence="1">
    <location>
        <begin position="329"/>
        <end position="330"/>
    </location>
    <ligand>
        <name>NADP(+)</name>
        <dbReference type="ChEBI" id="CHEBI:58349"/>
    </ligand>
</feature>